<proteinExistence type="inferred from homology"/>
<feature type="chain" id="PRO_0000125766" description="Large ribosomal subunit protein uL1">
    <location>
        <begin position="1"/>
        <end position="231"/>
    </location>
</feature>
<evidence type="ECO:0000255" key="1">
    <source>
        <dbReference type="HAMAP-Rule" id="MF_01318"/>
    </source>
</evidence>
<evidence type="ECO:0000305" key="2"/>
<name>RL1_CALS4</name>
<dbReference type="EMBL" id="AE008691">
    <property type="protein sequence ID" value="AAM25446.1"/>
    <property type="molecule type" value="Genomic_DNA"/>
</dbReference>
<dbReference type="RefSeq" id="WP_011026349.1">
    <property type="nucleotide sequence ID" value="NZ_JANUCV010000001.1"/>
</dbReference>
<dbReference type="SMR" id="Q8R7U3"/>
<dbReference type="STRING" id="273068.TTE2305"/>
<dbReference type="KEGG" id="tte:TTE2305"/>
<dbReference type="eggNOG" id="COG0081">
    <property type="taxonomic scope" value="Bacteria"/>
</dbReference>
<dbReference type="HOGENOM" id="CLU_062853_0_0_9"/>
<dbReference type="OrthoDB" id="9803740at2"/>
<dbReference type="Proteomes" id="UP000000555">
    <property type="component" value="Chromosome"/>
</dbReference>
<dbReference type="GO" id="GO:0015934">
    <property type="term" value="C:large ribosomal subunit"/>
    <property type="evidence" value="ECO:0007669"/>
    <property type="project" value="InterPro"/>
</dbReference>
<dbReference type="GO" id="GO:0019843">
    <property type="term" value="F:rRNA binding"/>
    <property type="evidence" value="ECO:0007669"/>
    <property type="project" value="UniProtKB-UniRule"/>
</dbReference>
<dbReference type="GO" id="GO:0003735">
    <property type="term" value="F:structural constituent of ribosome"/>
    <property type="evidence" value="ECO:0007669"/>
    <property type="project" value="InterPro"/>
</dbReference>
<dbReference type="GO" id="GO:0000049">
    <property type="term" value="F:tRNA binding"/>
    <property type="evidence" value="ECO:0007669"/>
    <property type="project" value="UniProtKB-KW"/>
</dbReference>
<dbReference type="GO" id="GO:0006417">
    <property type="term" value="P:regulation of translation"/>
    <property type="evidence" value="ECO:0007669"/>
    <property type="project" value="UniProtKB-KW"/>
</dbReference>
<dbReference type="GO" id="GO:0006412">
    <property type="term" value="P:translation"/>
    <property type="evidence" value="ECO:0007669"/>
    <property type="project" value="UniProtKB-UniRule"/>
</dbReference>
<dbReference type="CDD" id="cd00403">
    <property type="entry name" value="Ribosomal_L1"/>
    <property type="match status" value="1"/>
</dbReference>
<dbReference type="FunFam" id="3.40.50.790:FF:000001">
    <property type="entry name" value="50S ribosomal protein L1"/>
    <property type="match status" value="1"/>
</dbReference>
<dbReference type="Gene3D" id="3.30.190.20">
    <property type="match status" value="1"/>
</dbReference>
<dbReference type="Gene3D" id="3.40.50.790">
    <property type="match status" value="1"/>
</dbReference>
<dbReference type="HAMAP" id="MF_01318_B">
    <property type="entry name" value="Ribosomal_uL1_B"/>
    <property type="match status" value="1"/>
</dbReference>
<dbReference type="InterPro" id="IPR005878">
    <property type="entry name" value="Ribosom_uL1_bac-type"/>
</dbReference>
<dbReference type="InterPro" id="IPR002143">
    <property type="entry name" value="Ribosomal_uL1"/>
</dbReference>
<dbReference type="InterPro" id="IPR023674">
    <property type="entry name" value="Ribosomal_uL1-like"/>
</dbReference>
<dbReference type="InterPro" id="IPR028364">
    <property type="entry name" value="Ribosomal_uL1/biogenesis"/>
</dbReference>
<dbReference type="InterPro" id="IPR016095">
    <property type="entry name" value="Ribosomal_uL1_3-a/b-sand"/>
</dbReference>
<dbReference type="InterPro" id="IPR023673">
    <property type="entry name" value="Ribosomal_uL1_CS"/>
</dbReference>
<dbReference type="NCBIfam" id="TIGR01169">
    <property type="entry name" value="rplA_bact"/>
    <property type="match status" value="1"/>
</dbReference>
<dbReference type="PANTHER" id="PTHR36427">
    <property type="entry name" value="54S RIBOSOMAL PROTEIN L1, MITOCHONDRIAL"/>
    <property type="match status" value="1"/>
</dbReference>
<dbReference type="PANTHER" id="PTHR36427:SF3">
    <property type="entry name" value="LARGE RIBOSOMAL SUBUNIT PROTEIN UL1M"/>
    <property type="match status" value="1"/>
</dbReference>
<dbReference type="Pfam" id="PF00687">
    <property type="entry name" value="Ribosomal_L1"/>
    <property type="match status" value="1"/>
</dbReference>
<dbReference type="PIRSF" id="PIRSF002155">
    <property type="entry name" value="Ribosomal_L1"/>
    <property type="match status" value="1"/>
</dbReference>
<dbReference type="SUPFAM" id="SSF56808">
    <property type="entry name" value="Ribosomal protein L1"/>
    <property type="match status" value="1"/>
</dbReference>
<dbReference type="PROSITE" id="PS01199">
    <property type="entry name" value="RIBOSOMAL_L1"/>
    <property type="match status" value="1"/>
</dbReference>
<gene>
    <name evidence="1" type="primary">rplA</name>
    <name type="ordered locus">TTE2305</name>
</gene>
<sequence>MKRGKRYLENLKLYDKTQQYSSDEAMDIVLKTANAKFDETIDLAVRLGVDPRHADQQVRGTVILPHGTGKTVKVLVFAKGEKAKEAEAAGADYVGAEELVEKIQKENWFDYDVVIATPDMMGVVGRLGKLLGPKGLMPNPKSGTVTFEVEKAVKEAKAGKIEYRIDKAGIIHVPIGKKSFGKEKLLENFRTVMDAIIKSKPAAAKGQYIKSVVLSSTMGPGVKVNPARIFE</sequence>
<reference key="1">
    <citation type="journal article" date="2002" name="Genome Res.">
        <title>A complete sequence of the T. tengcongensis genome.</title>
        <authorList>
            <person name="Bao Q."/>
            <person name="Tian Y."/>
            <person name="Li W."/>
            <person name="Xu Z."/>
            <person name="Xuan Z."/>
            <person name="Hu S."/>
            <person name="Dong W."/>
            <person name="Yang J."/>
            <person name="Chen Y."/>
            <person name="Xue Y."/>
            <person name="Xu Y."/>
            <person name="Lai X."/>
            <person name="Huang L."/>
            <person name="Dong X."/>
            <person name="Ma Y."/>
            <person name="Ling L."/>
            <person name="Tan H."/>
            <person name="Chen R."/>
            <person name="Wang J."/>
            <person name="Yu J."/>
            <person name="Yang H."/>
        </authorList>
    </citation>
    <scope>NUCLEOTIDE SEQUENCE [LARGE SCALE GENOMIC DNA]</scope>
    <source>
        <strain>DSM 15242 / JCM 11007 / NBRC 100824 / MB4</strain>
    </source>
</reference>
<protein>
    <recommendedName>
        <fullName evidence="1">Large ribosomal subunit protein uL1</fullName>
    </recommendedName>
    <alternativeName>
        <fullName evidence="2">50S ribosomal protein L1</fullName>
    </alternativeName>
</protein>
<comment type="function">
    <text evidence="1">Binds directly to 23S rRNA. The L1 stalk is quite mobile in the ribosome, and is involved in E site tRNA release.</text>
</comment>
<comment type="function">
    <text evidence="1">Protein L1 is also a translational repressor protein, it controls the translation of the L11 operon by binding to its mRNA.</text>
</comment>
<comment type="subunit">
    <text evidence="1">Part of the 50S ribosomal subunit.</text>
</comment>
<comment type="similarity">
    <text evidence="1">Belongs to the universal ribosomal protein uL1 family.</text>
</comment>
<keyword id="KW-1185">Reference proteome</keyword>
<keyword id="KW-0678">Repressor</keyword>
<keyword id="KW-0687">Ribonucleoprotein</keyword>
<keyword id="KW-0689">Ribosomal protein</keyword>
<keyword id="KW-0694">RNA-binding</keyword>
<keyword id="KW-0699">rRNA-binding</keyword>
<keyword id="KW-0810">Translation regulation</keyword>
<keyword id="KW-0820">tRNA-binding</keyword>
<accession>Q8R7U3</accession>
<organism>
    <name type="scientific">Caldanaerobacter subterraneus subsp. tengcongensis (strain DSM 15242 / JCM 11007 / NBRC 100824 / MB4)</name>
    <name type="common">Thermoanaerobacter tengcongensis</name>
    <dbReference type="NCBI Taxonomy" id="273068"/>
    <lineage>
        <taxon>Bacteria</taxon>
        <taxon>Bacillati</taxon>
        <taxon>Bacillota</taxon>
        <taxon>Clostridia</taxon>
        <taxon>Thermoanaerobacterales</taxon>
        <taxon>Thermoanaerobacteraceae</taxon>
        <taxon>Caldanaerobacter</taxon>
    </lineage>
</organism>